<sequence>MEITAQMVKELRESTGAGMMDCKKALGEANGDMEKAVDILREKGLGQAAKKADRLASEGLVSVEVCSKCKKATISEINSETDFVARNPQFQALAKDTTAHIQSSGIKTVEELNTSTLNGVKFEEYFKTQIATIGENLVVRRFETISADDKGVVNGYVHSNGRVGVLIGAACESAEVANKAAEFIRNLCMHAAAMKPSVISYKDLDKDFVEKEFIALRAELEKENEELKRLGKPLHHIPEYASRCQIGEAELAKATKAIEEELKAEGKPEKIWDKIIPGKIERFYADNTVLDQRLTLLGQFYVMDDKKTIEQVIEEKSKELGGKIEIVKYVRFELGEGLEKKVDDFAAEVAAQIG</sequence>
<reference key="1">
    <citation type="submission" date="2007-10" db="EMBL/GenBank/DDBJ databases">
        <title>Genome sequence of Campylobacter concisus 13826 isolated from human feces.</title>
        <authorList>
            <person name="Fouts D.E."/>
            <person name="Mongodin E.F."/>
            <person name="Puiu D."/>
            <person name="Sebastian Y."/>
            <person name="Miller W.G."/>
            <person name="Mandrell R.E."/>
            <person name="On S."/>
            <person name="Nelson K.E."/>
        </authorList>
    </citation>
    <scope>NUCLEOTIDE SEQUENCE [LARGE SCALE GENOMIC DNA]</scope>
    <source>
        <strain>13826</strain>
    </source>
</reference>
<protein>
    <recommendedName>
        <fullName evidence="1">Elongation factor Ts</fullName>
        <shortName evidence="1">EF-Ts</shortName>
    </recommendedName>
</protein>
<evidence type="ECO:0000255" key="1">
    <source>
        <dbReference type="HAMAP-Rule" id="MF_00050"/>
    </source>
</evidence>
<organism>
    <name type="scientific">Campylobacter concisus (strain 13826)</name>
    <dbReference type="NCBI Taxonomy" id="360104"/>
    <lineage>
        <taxon>Bacteria</taxon>
        <taxon>Pseudomonadati</taxon>
        <taxon>Campylobacterota</taxon>
        <taxon>Epsilonproteobacteria</taxon>
        <taxon>Campylobacterales</taxon>
        <taxon>Campylobacteraceae</taxon>
        <taxon>Campylobacter</taxon>
    </lineage>
</organism>
<comment type="function">
    <text evidence="1">Associates with the EF-Tu.GDP complex and induces the exchange of GDP to GTP. It remains bound to the aminoacyl-tRNA.EF-Tu.GTP complex up to the GTP hydrolysis stage on the ribosome.</text>
</comment>
<comment type="subcellular location">
    <subcellularLocation>
        <location evidence="1">Cytoplasm</location>
    </subcellularLocation>
</comment>
<comment type="similarity">
    <text evidence="1">Belongs to the EF-Ts family.</text>
</comment>
<name>EFTS_CAMC1</name>
<feature type="chain" id="PRO_0000323445" description="Elongation factor Ts">
    <location>
        <begin position="1"/>
        <end position="354"/>
    </location>
</feature>
<feature type="region of interest" description="Involved in Mg(2+) ion dislocation from EF-Tu" evidence="1">
    <location>
        <begin position="81"/>
        <end position="84"/>
    </location>
</feature>
<accession>A7ZF27</accession>
<gene>
    <name evidence="1" type="primary">tsf</name>
    <name type="ordered locus">Ccon26_15380</name>
    <name type="ORF">CCC13826_0550</name>
</gene>
<keyword id="KW-0963">Cytoplasm</keyword>
<keyword id="KW-0251">Elongation factor</keyword>
<keyword id="KW-0648">Protein biosynthesis</keyword>
<proteinExistence type="inferred from homology"/>
<dbReference type="EMBL" id="CP000792">
    <property type="protein sequence ID" value="EAT99242.3"/>
    <property type="molecule type" value="Genomic_DNA"/>
</dbReference>
<dbReference type="RefSeq" id="WP_002941206.1">
    <property type="nucleotide sequence ID" value="NC_009802.2"/>
</dbReference>
<dbReference type="SMR" id="A7ZF27"/>
<dbReference type="STRING" id="360104.CCC13826_0550"/>
<dbReference type="KEGG" id="cco:CCC13826_0550"/>
<dbReference type="eggNOG" id="COG0264">
    <property type="taxonomic scope" value="Bacteria"/>
</dbReference>
<dbReference type="HOGENOM" id="CLU_047155_0_1_7"/>
<dbReference type="OrthoDB" id="9808348at2"/>
<dbReference type="Proteomes" id="UP000001121">
    <property type="component" value="Chromosome"/>
</dbReference>
<dbReference type="GO" id="GO:0005737">
    <property type="term" value="C:cytoplasm"/>
    <property type="evidence" value="ECO:0007669"/>
    <property type="project" value="UniProtKB-SubCell"/>
</dbReference>
<dbReference type="GO" id="GO:0003746">
    <property type="term" value="F:translation elongation factor activity"/>
    <property type="evidence" value="ECO:0007669"/>
    <property type="project" value="UniProtKB-UniRule"/>
</dbReference>
<dbReference type="CDD" id="cd14275">
    <property type="entry name" value="UBA_EF-Ts"/>
    <property type="match status" value="1"/>
</dbReference>
<dbReference type="FunFam" id="1.10.8.10:FF:000001">
    <property type="entry name" value="Elongation factor Ts"/>
    <property type="match status" value="1"/>
</dbReference>
<dbReference type="Gene3D" id="1.10.286.20">
    <property type="match status" value="1"/>
</dbReference>
<dbReference type="Gene3D" id="1.10.8.10">
    <property type="entry name" value="DNA helicase RuvA subunit, C-terminal domain"/>
    <property type="match status" value="1"/>
</dbReference>
<dbReference type="Gene3D" id="3.30.479.20">
    <property type="entry name" value="Elongation factor Ts, dimerisation domain"/>
    <property type="match status" value="2"/>
</dbReference>
<dbReference type="HAMAP" id="MF_00050">
    <property type="entry name" value="EF_Ts"/>
    <property type="match status" value="1"/>
</dbReference>
<dbReference type="InterPro" id="IPR036402">
    <property type="entry name" value="EF-Ts_dimer_sf"/>
</dbReference>
<dbReference type="InterPro" id="IPR001816">
    <property type="entry name" value="Transl_elong_EFTs/EF1B"/>
</dbReference>
<dbReference type="InterPro" id="IPR014039">
    <property type="entry name" value="Transl_elong_EFTs/EF1B_dimer"/>
</dbReference>
<dbReference type="InterPro" id="IPR018101">
    <property type="entry name" value="Transl_elong_Ts_CS"/>
</dbReference>
<dbReference type="InterPro" id="IPR009060">
    <property type="entry name" value="UBA-like_sf"/>
</dbReference>
<dbReference type="NCBIfam" id="TIGR00116">
    <property type="entry name" value="tsf"/>
    <property type="match status" value="1"/>
</dbReference>
<dbReference type="PANTHER" id="PTHR11741">
    <property type="entry name" value="ELONGATION FACTOR TS"/>
    <property type="match status" value="1"/>
</dbReference>
<dbReference type="PANTHER" id="PTHR11741:SF0">
    <property type="entry name" value="ELONGATION FACTOR TS, MITOCHONDRIAL"/>
    <property type="match status" value="1"/>
</dbReference>
<dbReference type="Pfam" id="PF00889">
    <property type="entry name" value="EF_TS"/>
    <property type="match status" value="1"/>
</dbReference>
<dbReference type="SUPFAM" id="SSF54713">
    <property type="entry name" value="Elongation factor Ts (EF-Ts), dimerisation domain"/>
    <property type="match status" value="2"/>
</dbReference>
<dbReference type="SUPFAM" id="SSF46934">
    <property type="entry name" value="UBA-like"/>
    <property type="match status" value="1"/>
</dbReference>
<dbReference type="PROSITE" id="PS01126">
    <property type="entry name" value="EF_TS_1"/>
    <property type="match status" value="1"/>
</dbReference>
<dbReference type="PROSITE" id="PS01127">
    <property type="entry name" value="EF_TS_2"/>
    <property type="match status" value="1"/>
</dbReference>